<reference key="1">
    <citation type="submission" date="2006-12" db="EMBL/GenBank/DDBJ databases">
        <title>Analysis of Taenia asiatica adult gene expression profile applying EST strategy.</title>
        <authorList>
            <person name="Huang J."/>
            <person name="Hu X."/>
            <person name="Bao H."/>
        </authorList>
    </citation>
    <scope>NUCLEOTIDE SEQUENCE [LARGE SCALE MRNA]</scope>
</reference>
<name>RL18_TAEAS</name>
<organism>
    <name type="scientific">Taenia asiatica</name>
    <name type="common">Asian tapeworm</name>
    <dbReference type="NCBI Taxonomy" id="60517"/>
    <lineage>
        <taxon>Eukaryota</taxon>
        <taxon>Metazoa</taxon>
        <taxon>Spiralia</taxon>
        <taxon>Lophotrochozoa</taxon>
        <taxon>Platyhelminthes</taxon>
        <taxon>Cestoda</taxon>
        <taxon>Eucestoda</taxon>
        <taxon>Cyclophyllidea</taxon>
        <taxon>Taeniidae</taxon>
        <taxon>Taenia</taxon>
    </lineage>
</organism>
<accession>A3F4S0</accession>
<comment type="subcellular location">
    <subcellularLocation>
        <location evidence="1">Cytoplasm</location>
    </subcellularLocation>
</comment>
<comment type="similarity">
    <text evidence="3">Belongs to the eukaryotic ribosomal protein eL18 family.</text>
</comment>
<dbReference type="EMBL" id="EF201870">
    <property type="protein sequence ID" value="ABN14899.1"/>
    <property type="molecule type" value="mRNA"/>
</dbReference>
<dbReference type="SMR" id="A3F4S0"/>
<dbReference type="STRING" id="60517.A3F4S0"/>
<dbReference type="GO" id="GO:0022625">
    <property type="term" value="C:cytosolic large ribosomal subunit"/>
    <property type="evidence" value="ECO:0007669"/>
    <property type="project" value="TreeGrafter"/>
</dbReference>
<dbReference type="GO" id="GO:0003723">
    <property type="term" value="F:RNA binding"/>
    <property type="evidence" value="ECO:0007669"/>
    <property type="project" value="TreeGrafter"/>
</dbReference>
<dbReference type="GO" id="GO:0003735">
    <property type="term" value="F:structural constituent of ribosome"/>
    <property type="evidence" value="ECO:0007669"/>
    <property type="project" value="InterPro"/>
</dbReference>
<dbReference type="GO" id="GO:0006412">
    <property type="term" value="P:translation"/>
    <property type="evidence" value="ECO:0007669"/>
    <property type="project" value="InterPro"/>
</dbReference>
<dbReference type="FunFam" id="3.100.10.10:FF:000001">
    <property type="entry name" value="60S ribosomal protein L18"/>
    <property type="match status" value="1"/>
</dbReference>
<dbReference type="Gene3D" id="3.100.10.10">
    <property type="match status" value="1"/>
</dbReference>
<dbReference type="InterPro" id="IPR000039">
    <property type="entry name" value="Ribosomal_eL18"/>
</dbReference>
<dbReference type="InterPro" id="IPR021132">
    <property type="entry name" value="Ribosomal_eL18/eL18-A/B/_CS"/>
</dbReference>
<dbReference type="InterPro" id="IPR021131">
    <property type="entry name" value="Ribosomal_uL15/eL18"/>
</dbReference>
<dbReference type="InterPro" id="IPR036227">
    <property type="entry name" value="Ribosomal_uL15/eL18_sf"/>
</dbReference>
<dbReference type="PANTHER" id="PTHR10934">
    <property type="entry name" value="60S RIBOSOMAL PROTEIN L18"/>
    <property type="match status" value="1"/>
</dbReference>
<dbReference type="PANTHER" id="PTHR10934:SF2">
    <property type="entry name" value="LARGE RIBOSOMAL SUBUNIT PROTEIN EL18"/>
    <property type="match status" value="1"/>
</dbReference>
<dbReference type="Pfam" id="PF17135">
    <property type="entry name" value="Ribosomal_L18"/>
    <property type="match status" value="1"/>
</dbReference>
<dbReference type="SUPFAM" id="SSF52080">
    <property type="entry name" value="Ribosomal proteins L15p and L18e"/>
    <property type="match status" value="1"/>
</dbReference>
<dbReference type="PROSITE" id="PS01106">
    <property type="entry name" value="RIBOSOMAL_L18E"/>
    <property type="match status" value="1"/>
</dbReference>
<evidence type="ECO:0000250" key="1"/>
<evidence type="ECO:0000256" key="2">
    <source>
        <dbReference type="SAM" id="MobiDB-lite"/>
    </source>
</evidence>
<evidence type="ECO:0000305" key="3"/>
<feature type="chain" id="PRO_0000291624" description="Large ribosomal subunit protein eL18">
    <location>
        <begin position="1"/>
        <end position="180"/>
    </location>
</feature>
<feature type="region of interest" description="Disordered" evidence="2">
    <location>
        <begin position="152"/>
        <end position="180"/>
    </location>
</feature>
<feature type="compositionally biased region" description="Basic and acidic residues" evidence="2">
    <location>
        <begin position="170"/>
        <end position="180"/>
    </location>
</feature>
<gene>
    <name type="primary">RPL18</name>
</gene>
<protein>
    <recommendedName>
        <fullName evidence="3">Large ribosomal subunit protein eL18</fullName>
    </recommendedName>
    <alternativeName>
        <fullName>60S ribosomal protein L18</fullName>
    </alternativeName>
</protein>
<sequence length="180" mass="20223">MGIDISHRNKRKVVRRNPKSGDVYLRLMVKLYKFLARRTHSKFNNIVKRRLFMSRINRAPLSLSRLTRQMKKPGREGKIAVVIGTVTNDIRMREVPKLTVCALRVTAGARTRILKAGGKVMTVDQLALKAPLGKGTVLLQGPRKAREACRHFGPAPGVPGSHTKPYVISKSRERTNAHRA</sequence>
<proteinExistence type="evidence at transcript level"/>
<keyword id="KW-0963">Cytoplasm</keyword>
<keyword id="KW-0687">Ribonucleoprotein</keyword>
<keyword id="KW-0689">Ribosomal protein</keyword>